<dbReference type="EMBL" id="CP001056">
    <property type="protein sequence ID" value="ACD23905.1"/>
    <property type="molecule type" value="Genomic_DNA"/>
</dbReference>
<dbReference type="SMR" id="B2TIJ1"/>
<dbReference type="KEGG" id="cbk:CLL_A0254"/>
<dbReference type="PATRIC" id="fig|935198.13.peg.229"/>
<dbReference type="HOGENOM" id="CLU_098841_0_1_9"/>
<dbReference type="Proteomes" id="UP000001195">
    <property type="component" value="Chromosome"/>
</dbReference>
<dbReference type="GO" id="GO:0022625">
    <property type="term" value="C:cytosolic large ribosomal subunit"/>
    <property type="evidence" value="ECO:0007669"/>
    <property type="project" value="TreeGrafter"/>
</dbReference>
<dbReference type="GO" id="GO:0008097">
    <property type="term" value="F:5S rRNA binding"/>
    <property type="evidence" value="ECO:0007669"/>
    <property type="project" value="TreeGrafter"/>
</dbReference>
<dbReference type="GO" id="GO:0003735">
    <property type="term" value="F:structural constituent of ribosome"/>
    <property type="evidence" value="ECO:0007669"/>
    <property type="project" value="InterPro"/>
</dbReference>
<dbReference type="GO" id="GO:0006412">
    <property type="term" value="P:translation"/>
    <property type="evidence" value="ECO:0007669"/>
    <property type="project" value="UniProtKB-UniRule"/>
</dbReference>
<dbReference type="CDD" id="cd00432">
    <property type="entry name" value="Ribosomal_L18_L5e"/>
    <property type="match status" value="1"/>
</dbReference>
<dbReference type="FunFam" id="3.30.420.100:FF:000001">
    <property type="entry name" value="50S ribosomal protein L18"/>
    <property type="match status" value="1"/>
</dbReference>
<dbReference type="Gene3D" id="3.30.420.100">
    <property type="match status" value="1"/>
</dbReference>
<dbReference type="HAMAP" id="MF_01337_B">
    <property type="entry name" value="Ribosomal_uL18_B"/>
    <property type="match status" value="1"/>
</dbReference>
<dbReference type="InterPro" id="IPR004389">
    <property type="entry name" value="Ribosomal_uL18_bac-type"/>
</dbReference>
<dbReference type="InterPro" id="IPR005484">
    <property type="entry name" value="Ribosomal_uL18_bac/euk"/>
</dbReference>
<dbReference type="NCBIfam" id="TIGR00060">
    <property type="entry name" value="L18_bact"/>
    <property type="match status" value="1"/>
</dbReference>
<dbReference type="PANTHER" id="PTHR12899">
    <property type="entry name" value="39S RIBOSOMAL PROTEIN L18, MITOCHONDRIAL"/>
    <property type="match status" value="1"/>
</dbReference>
<dbReference type="PANTHER" id="PTHR12899:SF3">
    <property type="entry name" value="LARGE RIBOSOMAL SUBUNIT PROTEIN UL18M"/>
    <property type="match status" value="1"/>
</dbReference>
<dbReference type="Pfam" id="PF00861">
    <property type="entry name" value="Ribosomal_L18p"/>
    <property type="match status" value="1"/>
</dbReference>
<dbReference type="SUPFAM" id="SSF53137">
    <property type="entry name" value="Translational machinery components"/>
    <property type="match status" value="1"/>
</dbReference>
<gene>
    <name evidence="1" type="primary">rplR</name>
    <name type="ordered locus">CLL_A0254</name>
</gene>
<sequence length="120" mass="13279">MFKKVDKKASRTKRHLRVRKKVFGTPDRPRLSVFRSEKNIYVQIIDDVNAVTIVAASSLDKEFSTNNGGNKEGAKLVGAAVAKKAIEKGITEVVFDRGGYVYHGRVQELAEGAREAGLKF</sequence>
<comment type="function">
    <text evidence="1">This is one of the proteins that bind and probably mediate the attachment of the 5S RNA into the large ribosomal subunit, where it forms part of the central protuberance.</text>
</comment>
<comment type="subunit">
    <text evidence="1">Part of the 50S ribosomal subunit; part of the 5S rRNA/L5/L18/L25 subcomplex. Contacts the 5S and 23S rRNAs.</text>
</comment>
<comment type="similarity">
    <text evidence="1">Belongs to the universal ribosomal protein uL18 family.</text>
</comment>
<reference key="1">
    <citation type="submission" date="2008-04" db="EMBL/GenBank/DDBJ databases">
        <title>Complete sequence of Clostridium botulinum strain Eklund.</title>
        <authorList>
            <person name="Brinkac L.M."/>
            <person name="Brown J.L."/>
            <person name="Bruce D."/>
            <person name="Detter C."/>
            <person name="Munk C."/>
            <person name="Smith L.A."/>
            <person name="Smith T.J."/>
            <person name="Sutton G."/>
            <person name="Brettin T.S."/>
        </authorList>
    </citation>
    <scope>NUCLEOTIDE SEQUENCE [LARGE SCALE GENOMIC DNA]</scope>
    <source>
        <strain>Eklund 17B / Type B</strain>
    </source>
</reference>
<feature type="chain" id="PRO_1000142643" description="Large ribosomal subunit protein uL18">
    <location>
        <begin position="1"/>
        <end position="120"/>
    </location>
</feature>
<accession>B2TIJ1</accession>
<name>RL18_CLOBB</name>
<proteinExistence type="inferred from homology"/>
<protein>
    <recommendedName>
        <fullName evidence="1">Large ribosomal subunit protein uL18</fullName>
    </recommendedName>
    <alternativeName>
        <fullName evidence="2">50S ribosomal protein L18</fullName>
    </alternativeName>
</protein>
<organism>
    <name type="scientific">Clostridium botulinum (strain Eklund 17B / Type B)</name>
    <dbReference type="NCBI Taxonomy" id="935198"/>
    <lineage>
        <taxon>Bacteria</taxon>
        <taxon>Bacillati</taxon>
        <taxon>Bacillota</taxon>
        <taxon>Clostridia</taxon>
        <taxon>Eubacteriales</taxon>
        <taxon>Clostridiaceae</taxon>
        <taxon>Clostridium</taxon>
    </lineage>
</organism>
<keyword id="KW-0687">Ribonucleoprotein</keyword>
<keyword id="KW-0689">Ribosomal protein</keyword>
<keyword id="KW-0694">RNA-binding</keyword>
<keyword id="KW-0699">rRNA-binding</keyword>
<evidence type="ECO:0000255" key="1">
    <source>
        <dbReference type="HAMAP-Rule" id="MF_01337"/>
    </source>
</evidence>
<evidence type="ECO:0000305" key="2"/>